<comment type="function">
    <text evidence="1">NDH shuttles electrons from NAD(P)H:plastoquinone, via FMN and iron-sulfur (Fe-S) centers, to quinones in the photosynthetic chain and possibly in a chloroplast respiratory chain. The immediate electron acceptor for the enzyme in this species is believed to be plastoquinone. Couples the redox reaction to proton translocation, and thus conserves the redox energy in a proton gradient.</text>
</comment>
<comment type="catalytic activity">
    <reaction evidence="1">
        <text>a plastoquinone + NADH + (n+1) H(+)(in) = a plastoquinol + NAD(+) + n H(+)(out)</text>
        <dbReference type="Rhea" id="RHEA:42608"/>
        <dbReference type="Rhea" id="RHEA-COMP:9561"/>
        <dbReference type="Rhea" id="RHEA-COMP:9562"/>
        <dbReference type="ChEBI" id="CHEBI:15378"/>
        <dbReference type="ChEBI" id="CHEBI:17757"/>
        <dbReference type="ChEBI" id="CHEBI:57540"/>
        <dbReference type="ChEBI" id="CHEBI:57945"/>
        <dbReference type="ChEBI" id="CHEBI:62192"/>
    </reaction>
</comment>
<comment type="catalytic activity">
    <reaction evidence="1">
        <text>a plastoquinone + NADPH + (n+1) H(+)(in) = a plastoquinol + NADP(+) + n H(+)(out)</text>
        <dbReference type="Rhea" id="RHEA:42612"/>
        <dbReference type="Rhea" id="RHEA-COMP:9561"/>
        <dbReference type="Rhea" id="RHEA-COMP:9562"/>
        <dbReference type="ChEBI" id="CHEBI:15378"/>
        <dbReference type="ChEBI" id="CHEBI:17757"/>
        <dbReference type="ChEBI" id="CHEBI:57783"/>
        <dbReference type="ChEBI" id="CHEBI:58349"/>
        <dbReference type="ChEBI" id="CHEBI:62192"/>
    </reaction>
</comment>
<comment type="subunit">
    <text evidence="1">NDH is composed of at least 16 different subunits, 5 of which are encoded in the nucleus.</text>
</comment>
<comment type="subcellular location">
    <subcellularLocation>
        <location evidence="1">Plastid</location>
        <location evidence="1">Chloroplast thylakoid membrane</location>
        <topology evidence="1">Multi-pass membrane protein</topology>
    </subcellularLocation>
</comment>
<comment type="similarity">
    <text evidence="1">Belongs to the complex I subunit 1 family.</text>
</comment>
<feature type="chain" id="PRO_0000298863" description="NAD(P)H-quinone oxidoreductase subunit 1, chloroplastic">
    <location>
        <begin position="1"/>
        <end position="360"/>
    </location>
</feature>
<feature type="transmembrane region" description="Helical" evidence="1">
    <location>
        <begin position="30"/>
        <end position="50"/>
    </location>
</feature>
<feature type="transmembrane region" description="Helical" evidence="1">
    <location>
        <begin position="98"/>
        <end position="118"/>
    </location>
</feature>
<feature type="transmembrane region" description="Helical" evidence="1">
    <location>
        <begin position="127"/>
        <end position="147"/>
    </location>
</feature>
<feature type="transmembrane region" description="Helical" evidence="1">
    <location>
        <begin position="165"/>
        <end position="185"/>
    </location>
</feature>
<feature type="transmembrane region" description="Helical" evidence="1">
    <location>
        <begin position="203"/>
        <end position="223"/>
    </location>
</feature>
<feature type="transmembrane region" description="Helical" evidence="1">
    <location>
        <begin position="248"/>
        <end position="268"/>
    </location>
</feature>
<feature type="transmembrane region" description="Helical" evidence="1">
    <location>
        <begin position="297"/>
        <end position="317"/>
    </location>
</feature>
<feature type="transmembrane region" description="Helical" evidence="1">
    <location>
        <begin position="340"/>
        <end position="360"/>
    </location>
</feature>
<gene>
    <name evidence="1" type="primary">ndhA</name>
</gene>
<evidence type="ECO:0000255" key="1">
    <source>
        <dbReference type="HAMAP-Rule" id="MF_01350"/>
    </source>
</evidence>
<dbReference type="EC" id="7.1.1.-" evidence="1"/>
<dbReference type="EMBL" id="AP009367">
    <property type="protein sequence ID" value="BAF49910.1"/>
    <property type="molecule type" value="Genomic_DNA"/>
</dbReference>
<dbReference type="RefSeq" id="YP_001123085.1">
    <property type="nucleotide sequence ID" value="NC_009266.1"/>
</dbReference>
<dbReference type="SMR" id="A4QJQ5"/>
<dbReference type="GeneID" id="4962315"/>
<dbReference type="GO" id="GO:0009535">
    <property type="term" value="C:chloroplast thylakoid membrane"/>
    <property type="evidence" value="ECO:0007669"/>
    <property type="project" value="UniProtKB-SubCell"/>
</dbReference>
<dbReference type="GO" id="GO:0003954">
    <property type="term" value="F:NADH dehydrogenase activity"/>
    <property type="evidence" value="ECO:0007669"/>
    <property type="project" value="TreeGrafter"/>
</dbReference>
<dbReference type="GO" id="GO:0016655">
    <property type="term" value="F:oxidoreductase activity, acting on NAD(P)H, quinone or similar compound as acceptor"/>
    <property type="evidence" value="ECO:0007669"/>
    <property type="project" value="UniProtKB-UniRule"/>
</dbReference>
<dbReference type="GO" id="GO:0048038">
    <property type="term" value="F:quinone binding"/>
    <property type="evidence" value="ECO:0007669"/>
    <property type="project" value="UniProtKB-KW"/>
</dbReference>
<dbReference type="GO" id="GO:0009060">
    <property type="term" value="P:aerobic respiration"/>
    <property type="evidence" value="ECO:0007669"/>
    <property type="project" value="TreeGrafter"/>
</dbReference>
<dbReference type="GO" id="GO:0019684">
    <property type="term" value="P:photosynthesis, light reaction"/>
    <property type="evidence" value="ECO:0007669"/>
    <property type="project" value="UniProtKB-UniRule"/>
</dbReference>
<dbReference type="HAMAP" id="MF_01350">
    <property type="entry name" value="NDH1_NuoH"/>
    <property type="match status" value="1"/>
</dbReference>
<dbReference type="InterPro" id="IPR001694">
    <property type="entry name" value="NADH_UbQ_OxRdtase_su1/FPO"/>
</dbReference>
<dbReference type="InterPro" id="IPR018086">
    <property type="entry name" value="NADH_UbQ_OxRdtase_su1_CS"/>
</dbReference>
<dbReference type="NCBIfam" id="NF004741">
    <property type="entry name" value="PRK06076.1-2"/>
    <property type="match status" value="1"/>
</dbReference>
<dbReference type="PANTHER" id="PTHR11432">
    <property type="entry name" value="NADH DEHYDROGENASE SUBUNIT 1"/>
    <property type="match status" value="1"/>
</dbReference>
<dbReference type="PANTHER" id="PTHR11432:SF3">
    <property type="entry name" value="NADH-UBIQUINONE OXIDOREDUCTASE CHAIN 1"/>
    <property type="match status" value="1"/>
</dbReference>
<dbReference type="Pfam" id="PF00146">
    <property type="entry name" value="NADHdh"/>
    <property type="match status" value="1"/>
</dbReference>
<dbReference type="PROSITE" id="PS00667">
    <property type="entry name" value="COMPLEX1_ND1_1"/>
    <property type="match status" value="1"/>
</dbReference>
<dbReference type="PROSITE" id="PS00668">
    <property type="entry name" value="COMPLEX1_ND1_2"/>
    <property type="match status" value="1"/>
</dbReference>
<organism>
    <name type="scientific">Aethionema grandiflorum</name>
    <name type="common">Persian stone-cress</name>
    <dbReference type="NCBI Taxonomy" id="72657"/>
    <lineage>
        <taxon>Eukaryota</taxon>
        <taxon>Viridiplantae</taxon>
        <taxon>Streptophyta</taxon>
        <taxon>Embryophyta</taxon>
        <taxon>Tracheophyta</taxon>
        <taxon>Spermatophyta</taxon>
        <taxon>Magnoliopsida</taxon>
        <taxon>eudicotyledons</taxon>
        <taxon>Gunneridae</taxon>
        <taxon>Pentapetalae</taxon>
        <taxon>rosids</taxon>
        <taxon>malvids</taxon>
        <taxon>Brassicales</taxon>
        <taxon>Brassicaceae</taxon>
        <taxon>Aethionemeae</taxon>
        <taxon>Aethionema</taxon>
    </lineage>
</organism>
<protein>
    <recommendedName>
        <fullName evidence="1">NAD(P)H-quinone oxidoreductase subunit 1, chloroplastic</fullName>
        <ecNumber evidence="1">7.1.1.-</ecNumber>
    </recommendedName>
    <alternativeName>
        <fullName evidence="1">NAD(P)H dehydrogenase subunit 1</fullName>
        <shortName evidence="1">NDH subunit 1</shortName>
    </alternativeName>
    <alternativeName>
        <fullName evidence="1">NADH-plastoquinone oxidoreductase subunit 1</fullName>
    </alternativeName>
</protein>
<keyword id="KW-0150">Chloroplast</keyword>
<keyword id="KW-0472">Membrane</keyword>
<keyword id="KW-0520">NAD</keyword>
<keyword id="KW-0521">NADP</keyword>
<keyword id="KW-0934">Plastid</keyword>
<keyword id="KW-0618">Plastoquinone</keyword>
<keyword id="KW-0874">Quinone</keyword>
<keyword id="KW-0793">Thylakoid</keyword>
<keyword id="KW-1278">Translocase</keyword>
<keyword id="KW-0812">Transmembrane</keyword>
<keyword id="KW-1133">Transmembrane helix</keyword>
<proteinExistence type="inferred from homology"/>
<sequence>MRIFATEVQTINSFVRLESFKEVYGLIWEFLPIFSLVLGILTGVLVLVWLEREISARIQQRIGPEYAGALGILQALADGIKLLFKENLRPSIGNTTLFSIGPSIAVISILLSYSVIPFSNHLVLADFNIGIFLWIAISSIAPIGLLMSGYGSNNKYSFLGGLRAAAQSISYEIPLTLCLLSISLLSNSLSTVDIVEAQSKYGFWGWNLWRQPIGFIIFLISSLAECERLPFDLPEAEEELVAGYQTEYSGIKFGLFYVASYLNLLISSLFVTVLYLGGWNISIPYISILELFERDQIFGTTIGIFITLAKTYLFLFISITTRWTLPRLRIDQLLNFGWKFLLPISLGNLLLTTSFQVFSL</sequence>
<geneLocation type="chloroplast"/>
<reference key="1">
    <citation type="submission" date="2007-03" db="EMBL/GenBank/DDBJ databases">
        <title>Sequencing analysis of Aethionema grandiflorum chloroplast DNA.</title>
        <authorList>
            <person name="Hosouchi T."/>
            <person name="Tsuruoka H."/>
            <person name="Kotani H."/>
        </authorList>
    </citation>
    <scope>NUCLEOTIDE SEQUENCE [LARGE SCALE GENOMIC DNA]</scope>
</reference>
<name>NU1C_AETGR</name>
<accession>A4QJQ5</accession>